<gene>
    <name evidence="1" type="primary">M</name>
</gene>
<organism>
    <name type="scientific">Influenza A virus (strain A/Fowl plague virus/Rostock/8/1934 H7N1)</name>
    <dbReference type="NCBI Taxonomy" id="392810"/>
    <lineage>
        <taxon>Viruses</taxon>
        <taxon>Riboviria</taxon>
        <taxon>Orthornavirae</taxon>
        <taxon>Negarnaviricota</taxon>
        <taxon>Polyploviricotina</taxon>
        <taxon>Insthoviricetes</taxon>
        <taxon>Articulavirales</taxon>
        <taxon>Orthomyxoviridae</taxon>
        <taxon>Alphainfluenzavirus</taxon>
        <taxon>Alphainfluenzavirus influenzae</taxon>
        <taxon>Influenza A virus</taxon>
    </lineage>
</organism>
<feature type="chain" id="PRO_0000078881" description="Matrix protein 2">
    <location>
        <begin position="1"/>
        <end position="97"/>
    </location>
</feature>
<feature type="topological domain" description="Virion surface" evidence="1">
    <location>
        <begin position="1"/>
        <end position="22"/>
    </location>
</feature>
<feature type="transmembrane region" description="Helical; Signal-anchor for type III membrane protein" evidence="1">
    <location>
        <begin position="23"/>
        <end position="43"/>
    </location>
</feature>
<feature type="topological domain" description="Intravirion" evidence="1">
    <location>
        <begin position="44"/>
        <end position="97"/>
    </location>
</feature>
<feature type="region of interest" description="Disordered" evidence="2">
    <location>
        <begin position="60"/>
        <end position="83"/>
    </location>
</feature>
<feature type="site" description="Essential for channel activity, possibly by being protonated during channel activation, and by forming the channel gate and the selective filter" evidence="1">
    <location>
        <position position="37"/>
    </location>
</feature>
<feature type="site" description="Seems to be involved in pH gating" evidence="1">
    <location>
        <position position="41"/>
    </location>
</feature>
<feature type="modified residue" description="Phosphoserine; by host" evidence="1">
    <location>
        <position position="64"/>
    </location>
</feature>
<feature type="modified residue" description="Phosphoserine; by host" evidence="1">
    <location>
        <position position="82"/>
    </location>
</feature>
<feature type="lipid moiety-binding region" description="S-palmitoyl cysteine; by host" evidence="1 4">
    <location>
        <position position="50"/>
    </location>
</feature>
<feature type="glycosylation site" description="N-linked (GlcNAc...) asparagine; by host" evidence="1">
    <location>
        <position position="20"/>
    </location>
</feature>
<feature type="disulfide bond" description="Interchain (with C-17)" evidence="1 3">
    <location>
        <position position="17"/>
    </location>
</feature>
<feature type="disulfide bond" description="Interchain (with C-19)" evidence="1 3">
    <location>
        <position position="19"/>
    </location>
</feature>
<protein>
    <recommendedName>
        <fullName evidence="1">Matrix protein 2</fullName>
    </recommendedName>
    <alternativeName>
        <fullName evidence="1">Proton channel protein M2</fullName>
    </alternativeName>
</protein>
<proteinExistence type="evidence at protein level"/>
<reference key="1">
    <citation type="journal article" date="1982" name="J. Gen. Virol.">
        <title>Nucleotide sequence of fowl plague virus RNA segment 7.</title>
        <authorList>
            <person name="McCauley J.W."/>
            <person name="Mahy B.W.J."/>
            <person name="Inglis S.C."/>
        </authorList>
    </citation>
    <scope>NUCLEOTIDE SEQUENCE [GENOMIC RNA]</scope>
</reference>
<reference key="2">
    <citation type="journal article" date="1991" name="Virology">
        <title>Evolution of pig influenza viruses.</title>
        <authorList>
            <person name="Schultz U."/>
            <person name="Fitch W.M."/>
            <person name="Ludwig S."/>
            <person name="Mandler J."/>
            <person name="Scholtissek C."/>
        </authorList>
    </citation>
    <scope>NUCLEOTIDE SEQUENCE [GENOMIC RNA]</scope>
</reference>
<reference key="3">
    <citation type="journal article" date="1990" name="Virology">
        <title>Palmitoylation of the influenza A virus M2 protein.</title>
        <authorList>
            <person name="Sugrue R.J."/>
            <person name="Belshe R.B."/>
            <person name="Hay A.J."/>
        </authorList>
    </citation>
    <scope>PALMITOYLATION AT CYS-50</scope>
</reference>
<reference key="4">
    <citation type="journal article" date="1991" name="Virology">
        <title>Structural characteristics of the M2 protein of influenza A viruses: evidence that it forms a tetrameric channel.</title>
        <authorList>
            <person name="Sugrue R.J."/>
            <person name="Hay A.J."/>
        </authorList>
    </citation>
    <scope>FUNCTION</scope>
    <scope>DISULFIDE BONDS</scope>
</reference>
<reference key="5">
    <citation type="journal article" date="2004" name="Virus Res.">
        <title>Assembly and budding of influenza virus.</title>
        <authorList>
            <person name="Nayak D.P."/>
            <person name="Hui E.K."/>
            <person name="Barman S."/>
        </authorList>
    </citation>
    <scope>REVIEW</scope>
</reference>
<reference key="6">
    <citation type="journal article" date="2003" name="FEBS Lett.">
        <title>Proton conduction through the M2 protein of the influenza A virus; a quantitative, mechanistic analysis of experimental data.</title>
        <authorList>
            <person name="Lear J.D."/>
        </authorList>
    </citation>
    <scope>REVIEW</scope>
</reference>
<reference key="7">
    <citation type="journal article" date="2003" name="FEBS Lett.">
        <title>Computational studies of proton transport through the M2 channel.</title>
        <authorList>
            <person name="Wu Y."/>
            <person name="Voth G.A."/>
        </authorList>
    </citation>
    <scope>REVIEW</scope>
</reference>
<name>M2_I34A0</name>
<sequence length="97" mass="11226">MSLLTEVETPTRNGWECRCNDSSDPLIIAASIIGILHLILWILNRLFFKCIYRRLKYGLKRGPSTEGVPESMREEYRQEQQSAVDVDDGHFVNIELE</sequence>
<comment type="function">
    <text evidence="1 3">Forms a proton-selective ion channel that is necessary for the efficient release of the viral genome during virus entry. After attaching to the cell surface, the virion enters the cell by endocytosis. Acidification of the endosome triggers M2 ion channel activity. The influx of protons into virion interior is believed to disrupt interactions between the viral ribonucleoprotein (RNP), matrix protein 1 (M1), and lipid bilayers, thereby freeing the viral genome from interaction with viral proteins and enabling RNA segments to migrate to the host cell nucleus, where influenza virus RNA transcription and replication occur. Also plays a role in viral proteins secretory pathway. Elevates the intravesicular pH of normally acidic compartments, such as trans-Golgi network, preventing newly formed hemagglutinin from premature switching to the fusion-active conformation.</text>
</comment>
<comment type="activity regulation">
    <text>The M2 protein from most influenza A strains is inhibited by amantadine and rimantadine, resulting in viral uncoating incapacity. Emergence of amantadine-resistant variants is usually rapid.</text>
</comment>
<comment type="subunit">
    <text evidence="1">Homotetramer; composed of two disulfide-linked dimers held together by non-covalent interactions. May interact with matrix protein 1.</text>
</comment>
<comment type="subcellular location">
    <subcellularLocation>
        <location evidence="1">Virion membrane</location>
    </subcellularLocation>
    <subcellularLocation>
        <location evidence="1">Host apical cell membrane</location>
        <topology evidence="1">Single-pass type III membrane protein</topology>
    </subcellularLocation>
    <text evidence="1">Abundantly expressed at the apical plasma membrane in infected polarized epithelial cells, in close proximity to budding and assembled virions. Minor component of virions (only 16-20 molecules/virion).</text>
</comment>
<comment type="alternative products">
    <event type="alternative splicing"/>
    <isoform>
        <id>P03492-1</id>
        <name>M2</name>
        <sequence type="displayed"/>
    </isoform>
    <isoform>
        <id>P03488-1</id>
        <name>M1</name>
        <sequence type="external"/>
    </isoform>
    <text>Only the first 9 residues are shared by the 2 isoforms.</text>
</comment>
<comment type="domain">
    <text evidence="1">Cytoplasmic tail plays an important role in virion assembly and morphogenesis.</text>
</comment>
<comment type="miscellaneous">
    <text evidence="1">When the channel is activated, one or more imidazole moieties of His-37 probably become bi-protonated.</text>
</comment>
<comment type="similarity">
    <text evidence="1">Belongs to the influenza viruses matrix protein M2 family.</text>
</comment>
<organismHost>
    <name type="scientific">Aves</name>
    <dbReference type="NCBI Taxonomy" id="8782"/>
</organismHost>
<dbReference type="EMBL" id="X05905">
    <property type="protein sequence ID" value="CAA29335.1"/>
    <property type="molecule type" value="Genomic_RNA"/>
</dbReference>
<dbReference type="EMBL" id="M55474">
    <property type="protein sequence ID" value="AAA43257.1"/>
    <property type="molecule type" value="Genomic_RNA"/>
</dbReference>
<dbReference type="EMBL" id="M55475">
    <property type="protein sequence ID" value="AAA43259.1"/>
    <property type="molecule type" value="Genomic_RNA"/>
</dbReference>
<dbReference type="PIR" id="A04085">
    <property type="entry name" value="MFIV2F"/>
</dbReference>
<dbReference type="SMR" id="P03492"/>
<dbReference type="GlyCosmos" id="P03492">
    <property type="glycosylation" value="1 site, No reported glycans"/>
</dbReference>
<dbReference type="GO" id="GO:0020002">
    <property type="term" value="C:host cell plasma membrane"/>
    <property type="evidence" value="ECO:0007669"/>
    <property type="project" value="UniProtKB-SubCell"/>
</dbReference>
<dbReference type="GO" id="GO:0016020">
    <property type="term" value="C:membrane"/>
    <property type="evidence" value="ECO:0007669"/>
    <property type="project" value="UniProtKB-UniRule"/>
</dbReference>
<dbReference type="GO" id="GO:0055036">
    <property type="term" value="C:virion membrane"/>
    <property type="evidence" value="ECO:0007669"/>
    <property type="project" value="UniProtKB-SubCell"/>
</dbReference>
<dbReference type="GO" id="GO:0005216">
    <property type="term" value="F:monoatomic ion channel activity"/>
    <property type="evidence" value="ECO:0007669"/>
    <property type="project" value="UniProtKB-UniRule"/>
</dbReference>
<dbReference type="GO" id="GO:0015078">
    <property type="term" value="F:proton transmembrane transporter activity"/>
    <property type="evidence" value="ECO:0007669"/>
    <property type="project" value="UniProtKB-UniRule"/>
</dbReference>
<dbReference type="GO" id="GO:0051259">
    <property type="term" value="P:protein complex oligomerization"/>
    <property type="evidence" value="ECO:0007669"/>
    <property type="project" value="UniProtKB-UniRule"/>
</dbReference>
<dbReference type="GO" id="GO:0044694">
    <property type="term" value="P:symbiont genome entry into host cell via pore formation in plasma membrane"/>
    <property type="evidence" value="ECO:0007669"/>
    <property type="project" value="UniProtKB-UniRule"/>
</dbReference>
<dbReference type="GO" id="GO:0140321">
    <property type="term" value="P:symbiont-mediated suppression of host autophagy"/>
    <property type="evidence" value="ECO:0007669"/>
    <property type="project" value="UniProtKB-KW"/>
</dbReference>
<dbReference type="Gene3D" id="6.10.250.1640">
    <property type="match status" value="1"/>
</dbReference>
<dbReference type="HAMAP" id="MF_04069">
    <property type="entry name" value="INFV_M2"/>
    <property type="match status" value="1"/>
</dbReference>
<dbReference type="InterPro" id="IPR002089">
    <property type="entry name" value="Flu_M2"/>
</dbReference>
<dbReference type="Pfam" id="PF00599">
    <property type="entry name" value="Flu_M2"/>
    <property type="match status" value="1"/>
</dbReference>
<accession>P03492</accession>
<accession>Q76V61</accession>
<keyword id="KW-0025">Alternative splicing</keyword>
<keyword id="KW-1015">Disulfide bond</keyword>
<keyword id="KW-0325">Glycoprotein</keyword>
<keyword id="KW-1032">Host cell membrane</keyword>
<keyword id="KW-1043">Host membrane</keyword>
<keyword id="KW-0945">Host-virus interaction</keyword>
<keyword id="KW-0375">Hydrogen ion transport</keyword>
<keyword id="KW-1083">Inhibition of host autophagy by virus</keyword>
<keyword id="KW-0407">Ion channel</keyword>
<keyword id="KW-0406">Ion transport</keyword>
<keyword id="KW-0449">Lipoprotein</keyword>
<keyword id="KW-0472">Membrane</keyword>
<keyword id="KW-0564">Palmitate</keyword>
<keyword id="KW-0597">Phosphoprotein</keyword>
<keyword id="KW-0735">Signal-anchor</keyword>
<keyword id="KW-0812">Transmembrane</keyword>
<keyword id="KW-1133">Transmembrane helix</keyword>
<keyword id="KW-0813">Transport</keyword>
<keyword id="KW-1182">Viral ion channel</keyword>
<keyword id="KW-0946">Virion</keyword>
<evidence type="ECO:0000255" key="1">
    <source>
        <dbReference type="HAMAP-Rule" id="MF_04069"/>
    </source>
</evidence>
<evidence type="ECO:0000256" key="2">
    <source>
        <dbReference type="SAM" id="MobiDB-lite"/>
    </source>
</evidence>
<evidence type="ECO:0000269" key="3">
    <source>
    </source>
</evidence>
<evidence type="ECO:0000269" key="4">
    <source>
    </source>
</evidence>